<gene>
    <name evidence="1" type="primary">rpmG</name>
    <name type="ordered locus">CCA_00527</name>
</gene>
<proteinExistence type="inferred from homology"/>
<comment type="similarity">
    <text evidence="1">Belongs to the bacterial ribosomal protein bL33 family.</text>
</comment>
<name>RL33_CHLCV</name>
<dbReference type="EMBL" id="AE015925">
    <property type="protein sequence ID" value="AAP05270.1"/>
    <property type="molecule type" value="Genomic_DNA"/>
</dbReference>
<dbReference type="RefSeq" id="WP_006343203.1">
    <property type="nucleotide sequence ID" value="NC_003361.3"/>
</dbReference>
<dbReference type="SMR" id="Q822Z9"/>
<dbReference type="STRING" id="227941.CCA_00527"/>
<dbReference type="GeneID" id="93024053"/>
<dbReference type="KEGG" id="cca:CCA_00527"/>
<dbReference type="eggNOG" id="COG0267">
    <property type="taxonomic scope" value="Bacteria"/>
</dbReference>
<dbReference type="HOGENOM" id="CLU_190949_1_1_0"/>
<dbReference type="OrthoDB" id="21586at2"/>
<dbReference type="Proteomes" id="UP000002193">
    <property type="component" value="Chromosome"/>
</dbReference>
<dbReference type="GO" id="GO:0022625">
    <property type="term" value="C:cytosolic large ribosomal subunit"/>
    <property type="evidence" value="ECO:0007669"/>
    <property type="project" value="TreeGrafter"/>
</dbReference>
<dbReference type="GO" id="GO:0003735">
    <property type="term" value="F:structural constituent of ribosome"/>
    <property type="evidence" value="ECO:0007669"/>
    <property type="project" value="InterPro"/>
</dbReference>
<dbReference type="GO" id="GO:0006412">
    <property type="term" value="P:translation"/>
    <property type="evidence" value="ECO:0007669"/>
    <property type="project" value="UniProtKB-UniRule"/>
</dbReference>
<dbReference type="FunFam" id="2.20.28.120:FF:000009">
    <property type="entry name" value="50S ribosomal protein L33"/>
    <property type="match status" value="1"/>
</dbReference>
<dbReference type="Gene3D" id="2.20.28.120">
    <property type="entry name" value="Ribosomal protein L33"/>
    <property type="match status" value="1"/>
</dbReference>
<dbReference type="HAMAP" id="MF_00294">
    <property type="entry name" value="Ribosomal_bL33"/>
    <property type="match status" value="1"/>
</dbReference>
<dbReference type="InterPro" id="IPR001705">
    <property type="entry name" value="Ribosomal_bL33"/>
</dbReference>
<dbReference type="InterPro" id="IPR018264">
    <property type="entry name" value="Ribosomal_bL33_CS"/>
</dbReference>
<dbReference type="InterPro" id="IPR038584">
    <property type="entry name" value="Ribosomal_bL33_sf"/>
</dbReference>
<dbReference type="InterPro" id="IPR011332">
    <property type="entry name" value="Ribosomal_zn-bd"/>
</dbReference>
<dbReference type="NCBIfam" id="NF001860">
    <property type="entry name" value="PRK00595.1"/>
    <property type="match status" value="1"/>
</dbReference>
<dbReference type="NCBIfam" id="TIGR01023">
    <property type="entry name" value="rpmG_bact"/>
    <property type="match status" value="1"/>
</dbReference>
<dbReference type="PANTHER" id="PTHR15238">
    <property type="entry name" value="54S RIBOSOMAL PROTEIN L39, MITOCHONDRIAL"/>
    <property type="match status" value="1"/>
</dbReference>
<dbReference type="PANTHER" id="PTHR15238:SF1">
    <property type="entry name" value="LARGE RIBOSOMAL SUBUNIT PROTEIN BL33M"/>
    <property type="match status" value="1"/>
</dbReference>
<dbReference type="Pfam" id="PF00471">
    <property type="entry name" value="Ribosomal_L33"/>
    <property type="match status" value="1"/>
</dbReference>
<dbReference type="SUPFAM" id="SSF57829">
    <property type="entry name" value="Zn-binding ribosomal proteins"/>
    <property type="match status" value="1"/>
</dbReference>
<dbReference type="PROSITE" id="PS00582">
    <property type="entry name" value="RIBOSOMAL_L33"/>
    <property type="match status" value="1"/>
</dbReference>
<organism>
    <name type="scientific">Chlamydia caviae (strain ATCC VR-813 / DSM 19441 / 03DC25 / GPIC)</name>
    <name type="common">Chlamydophila caviae</name>
    <dbReference type="NCBI Taxonomy" id="227941"/>
    <lineage>
        <taxon>Bacteria</taxon>
        <taxon>Pseudomonadati</taxon>
        <taxon>Chlamydiota</taxon>
        <taxon>Chlamydiia</taxon>
        <taxon>Chlamydiales</taxon>
        <taxon>Chlamydiaceae</taxon>
        <taxon>Chlamydia/Chlamydophila group</taxon>
        <taxon>Chlamydia</taxon>
    </lineage>
</organism>
<evidence type="ECO:0000255" key="1">
    <source>
        <dbReference type="HAMAP-Rule" id="MF_00294"/>
    </source>
</evidence>
<evidence type="ECO:0000305" key="2"/>
<reference key="1">
    <citation type="journal article" date="2003" name="Nucleic Acids Res.">
        <title>Genome sequence of Chlamydophila caviae (Chlamydia psittaci GPIC): examining the role of niche-specific genes in the evolution of the Chlamydiaceae.</title>
        <authorList>
            <person name="Read T.D."/>
            <person name="Myers G.S.A."/>
            <person name="Brunham R.C."/>
            <person name="Nelson W.C."/>
            <person name="Paulsen I.T."/>
            <person name="Heidelberg J.F."/>
            <person name="Holtzapple E.K."/>
            <person name="Khouri H.M."/>
            <person name="Federova N.B."/>
            <person name="Carty H.A."/>
            <person name="Umayam L.A."/>
            <person name="Haft D.H."/>
            <person name="Peterson J.D."/>
            <person name="Beanan M.J."/>
            <person name="White O."/>
            <person name="Salzberg S.L."/>
            <person name="Hsia R.-C."/>
            <person name="McClarty G."/>
            <person name="Rank R.G."/>
            <person name="Bavoil P.M."/>
            <person name="Fraser C.M."/>
        </authorList>
    </citation>
    <scope>NUCLEOTIDE SEQUENCE [LARGE SCALE GENOMIC DNA]</scope>
    <source>
        <strain>ATCC VR-813 / DSM 19441 / 03DC25 / GPIC</strain>
    </source>
</reference>
<accession>Q822Z9</accession>
<keyword id="KW-0687">Ribonucleoprotein</keyword>
<keyword id="KW-0689">Ribosomal protein</keyword>
<feature type="chain" id="PRO_0000170149" description="Large ribosomal subunit protein bL33">
    <location>
        <begin position="1"/>
        <end position="52"/>
    </location>
</feature>
<sequence length="52" mass="6327">MASKNREIIKLKSSESSDMYWTVKNKRKTTGRLELKKYDRKLRRHVIFKEAK</sequence>
<protein>
    <recommendedName>
        <fullName evidence="1">Large ribosomal subunit protein bL33</fullName>
    </recommendedName>
    <alternativeName>
        <fullName evidence="2">50S ribosomal protein L33</fullName>
    </alternativeName>
</protein>